<keyword id="KW-0418">Kinase</keyword>
<keyword id="KW-0547">Nucleotide-binding</keyword>
<keyword id="KW-0723">Serine/threonine-protein kinase</keyword>
<keyword id="KW-0808">Transferase</keyword>
<accession>A6U235</accession>
<dbReference type="EC" id="2.7.11.32" evidence="1"/>
<dbReference type="EC" id="2.7.4.27" evidence="1"/>
<dbReference type="EMBL" id="CP000736">
    <property type="protein sequence ID" value="ABR52503.1"/>
    <property type="molecule type" value="Genomic_DNA"/>
</dbReference>
<dbReference type="SMR" id="A6U235"/>
<dbReference type="KEGG" id="sah:SaurJH1_1655"/>
<dbReference type="HOGENOM" id="CLU_046206_2_1_9"/>
<dbReference type="GO" id="GO:0043531">
    <property type="term" value="F:ADP binding"/>
    <property type="evidence" value="ECO:0007669"/>
    <property type="project" value="UniProtKB-UniRule"/>
</dbReference>
<dbReference type="GO" id="GO:0005524">
    <property type="term" value="F:ATP binding"/>
    <property type="evidence" value="ECO:0007669"/>
    <property type="project" value="InterPro"/>
</dbReference>
<dbReference type="GO" id="GO:0016776">
    <property type="term" value="F:phosphotransferase activity, phosphate group as acceptor"/>
    <property type="evidence" value="ECO:0007669"/>
    <property type="project" value="UniProtKB-UniRule"/>
</dbReference>
<dbReference type="GO" id="GO:0004674">
    <property type="term" value="F:protein serine/threonine kinase activity"/>
    <property type="evidence" value="ECO:0007669"/>
    <property type="project" value="UniProtKB-UniRule"/>
</dbReference>
<dbReference type="HAMAP" id="MF_00921">
    <property type="entry name" value="PDRP"/>
    <property type="match status" value="1"/>
</dbReference>
<dbReference type="InterPro" id="IPR005177">
    <property type="entry name" value="Kinase-pyrophosphorylase"/>
</dbReference>
<dbReference type="InterPro" id="IPR026565">
    <property type="entry name" value="PPDK_reg"/>
</dbReference>
<dbReference type="NCBIfam" id="NF003742">
    <property type="entry name" value="PRK05339.1"/>
    <property type="match status" value="1"/>
</dbReference>
<dbReference type="PANTHER" id="PTHR31756">
    <property type="entry name" value="PYRUVATE, PHOSPHATE DIKINASE REGULATORY PROTEIN 1, CHLOROPLASTIC"/>
    <property type="match status" value="1"/>
</dbReference>
<dbReference type="PANTHER" id="PTHR31756:SF3">
    <property type="entry name" value="PYRUVATE, PHOSPHATE DIKINASE REGULATORY PROTEIN 1, CHLOROPLASTIC"/>
    <property type="match status" value="1"/>
</dbReference>
<dbReference type="Pfam" id="PF03618">
    <property type="entry name" value="Kinase-PPPase"/>
    <property type="match status" value="1"/>
</dbReference>
<name>PDRP_STAA2</name>
<sequence>MEKIKIIVASDSIGETAELVARAGISQFNPKQCKNELLRYPYIESFEDVDEVIQVAKDTNAIIVYTLIKPEMKQYMSEKVAEFQLKSVDIMGPLMDLLSASVEEKPYNEPGIVHRLDDAYFKKIDAIEFAVKYDDGKDPKGLPKADIVLLGISRTSKTPLSQYLAHKSYKVMNVPIVPEVTPPDGLYDIDPKKCIALKISEEKLNRIRKERLKQLGLGDTARYATEARIQEELNYFEEIVSEIGCPVIDVSQKAIEETANDIIHYIEQNKSK</sequence>
<evidence type="ECO:0000255" key="1">
    <source>
        <dbReference type="HAMAP-Rule" id="MF_00921"/>
    </source>
</evidence>
<gene>
    <name type="ordered locus">SaurJH1_1655</name>
</gene>
<feature type="chain" id="PRO_1000084477" description="Putative pyruvate, phosphate dikinase regulatory protein">
    <location>
        <begin position="1"/>
        <end position="272"/>
    </location>
</feature>
<feature type="binding site" evidence="1">
    <location>
        <begin position="151"/>
        <end position="158"/>
    </location>
    <ligand>
        <name>ADP</name>
        <dbReference type="ChEBI" id="CHEBI:456216"/>
    </ligand>
</feature>
<comment type="function">
    <text evidence="1">Bifunctional serine/threonine kinase and phosphorylase involved in the regulation of the pyruvate, phosphate dikinase (PPDK) by catalyzing its phosphorylation/dephosphorylation.</text>
</comment>
<comment type="catalytic activity">
    <reaction evidence="1">
        <text>N(tele)-phospho-L-histidyl/L-threonyl-[pyruvate, phosphate dikinase] + ADP = N(tele)-phospho-L-histidyl/O-phospho-L-threonyl-[pyruvate, phosphate dikinase] + AMP + H(+)</text>
        <dbReference type="Rhea" id="RHEA:43692"/>
        <dbReference type="Rhea" id="RHEA-COMP:10650"/>
        <dbReference type="Rhea" id="RHEA-COMP:10651"/>
        <dbReference type="ChEBI" id="CHEBI:15378"/>
        <dbReference type="ChEBI" id="CHEBI:30013"/>
        <dbReference type="ChEBI" id="CHEBI:61977"/>
        <dbReference type="ChEBI" id="CHEBI:83586"/>
        <dbReference type="ChEBI" id="CHEBI:456215"/>
        <dbReference type="ChEBI" id="CHEBI:456216"/>
        <dbReference type="EC" id="2.7.11.32"/>
    </reaction>
</comment>
<comment type="catalytic activity">
    <reaction evidence="1">
        <text>N(tele)-phospho-L-histidyl/O-phospho-L-threonyl-[pyruvate, phosphate dikinase] + phosphate + H(+) = N(tele)-phospho-L-histidyl/L-threonyl-[pyruvate, phosphate dikinase] + diphosphate</text>
        <dbReference type="Rhea" id="RHEA:43696"/>
        <dbReference type="Rhea" id="RHEA-COMP:10650"/>
        <dbReference type="Rhea" id="RHEA-COMP:10651"/>
        <dbReference type="ChEBI" id="CHEBI:15378"/>
        <dbReference type="ChEBI" id="CHEBI:30013"/>
        <dbReference type="ChEBI" id="CHEBI:33019"/>
        <dbReference type="ChEBI" id="CHEBI:43474"/>
        <dbReference type="ChEBI" id="CHEBI:61977"/>
        <dbReference type="ChEBI" id="CHEBI:83586"/>
        <dbReference type="EC" id="2.7.4.27"/>
    </reaction>
</comment>
<comment type="similarity">
    <text evidence="1">Belongs to the pyruvate, phosphate/water dikinase regulatory protein family. PDRP subfamily.</text>
</comment>
<reference key="1">
    <citation type="submission" date="2007-06" db="EMBL/GenBank/DDBJ databases">
        <title>Complete sequence of chromosome of Staphylococcus aureus subsp. aureus JH1.</title>
        <authorList>
            <consortium name="US DOE Joint Genome Institute"/>
            <person name="Copeland A."/>
            <person name="Lucas S."/>
            <person name="Lapidus A."/>
            <person name="Barry K."/>
            <person name="Detter J.C."/>
            <person name="Glavina del Rio T."/>
            <person name="Hammon N."/>
            <person name="Israni S."/>
            <person name="Dalin E."/>
            <person name="Tice H."/>
            <person name="Pitluck S."/>
            <person name="Chain P."/>
            <person name="Malfatti S."/>
            <person name="Shin M."/>
            <person name="Vergez L."/>
            <person name="Schmutz J."/>
            <person name="Larimer F."/>
            <person name="Land M."/>
            <person name="Hauser L."/>
            <person name="Kyrpides N."/>
            <person name="Ivanova N."/>
            <person name="Tomasz A."/>
            <person name="Richardson P."/>
        </authorList>
    </citation>
    <scope>NUCLEOTIDE SEQUENCE [LARGE SCALE GENOMIC DNA]</scope>
    <source>
        <strain>JH1</strain>
    </source>
</reference>
<proteinExistence type="inferred from homology"/>
<protein>
    <recommendedName>
        <fullName evidence="1">Putative pyruvate, phosphate dikinase regulatory protein</fullName>
        <shortName evidence="1">PPDK regulatory protein</shortName>
        <ecNumber evidence="1">2.7.11.32</ecNumber>
        <ecNumber evidence="1">2.7.4.27</ecNumber>
    </recommendedName>
</protein>
<organism>
    <name type="scientific">Staphylococcus aureus (strain JH1)</name>
    <dbReference type="NCBI Taxonomy" id="359787"/>
    <lineage>
        <taxon>Bacteria</taxon>
        <taxon>Bacillati</taxon>
        <taxon>Bacillota</taxon>
        <taxon>Bacilli</taxon>
        <taxon>Bacillales</taxon>
        <taxon>Staphylococcaceae</taxon>
        <taxon>Staphylococcus</taxon>
    </lineage>
</organism>